<protein>
    <recommendedName>
        <fullName>Probable carboxypeptidase NFIA_052450</fullName>
        <ecNumber>3.4.17.-</ecNumber>
    </recommendedName>
    <alternativeName>
        <fullName>Peptidase M20 domain-containing protein NFIA_052450</fullName>
    </alternativeName>
</protein>
<gene>
    <name type="ORF">NFIA_052450</name>
</gene>
<name>P20D1_NEOFI</name>
<comment type="cofactor">
    <cofactor evidence="1">
        <name>Zn(2+)</name>
        <dbReference type="ChEBI" id="CHEBI:29105"/>
    </cofactor>
    <text evidence="1">Binds 2 Zn(2+) ions per subunit.</text>
</comment>
<comment type="subcellular location">
    <subcellularLocation>
        <location evidence="3">Secreted</location>
    </subcellularLocation>
</comment>
<comment type="similarity">
    <text evidence="3">Belongs to the peptidase M20A family.</text>
</comment>
<feature type="signal peptide" evidence="2">
    <location>
        <begin position="1"/>
        <end position="16"/>
    </location>
</feature>
<feature type="chain" id="PRO_0000411236" description="Probable carboxypeptidase NFIA_052450">
    <location>
        <begin position="17"/>
        <end position="441"/>
    </location>
</feature>
<feature type="active site" description="Proton acceptor" evidence="1">
    <location>
        <position position="198"/>
    </location>
</feature>
<feature type="binding site" evidence="1">
    <location>
        <position position="166"/>
    </location>
    <ligand>
        <name>Zn(2+)</name>
        <dbReference type="ChEBI" id="CHEBI:29105"/>
        <label>1</label>
    </ligand>
</feature>
<feature type="binding site" evidence="1">
    <location>
        <position position="166"/>
    </location>
    <ligand>
        <name>Zn(2+)</name>
        <dbReference type="ChEBI" id="CHEBI:29105"/>
        <label>2</label>
    </ligand>
</feature>
<feature type="binding site" evidence="1">
    <location>
        <position position="199"/>
    </location>
    <ligand>
        <name>Zn(2+)</name>
        <dbReference type="ChEBI" id="CHEBI:29105"/>
        <label>1</label>
    </ligand>
</feature>
<feature type="glycosylation site" description="N-linked (GlcNAc...) asparagine" evidence="2">
    <location>
        <position position="88"/>
    </location>
</feature>
<feature type="glycosylation site" description="N-linked (GlcNAc...) asparagine" evidence="2">
    <location>
        <position position="150"/>
    </location>
</feature>
<feature type="glycosylation site" description="N-linked (GlcNAc...) asparagine" evidence="2">
    <location>
        <position position="354"/>
    </location>
</feature>
<feature type="glycosylation site" description="N-linked (GlcNAc...) asparagine" evidence="2">
    <location>
        <position position="373"/>
    </location>
</feature>
<accession>A1DM79</accession>
<reference key="1">
    <citation type="journal article" date="2008" name="PLoS Genet.">
        <title>Genomic islands in the pathogenic filamentous fungus Aspergillus fumigatus.</title>
        <authorList>
            <person name="Fedorova N.D."/>
            <person name="Khaldi N."/>
            <person name="Joardar V.S."/>
            <person name="Maiti R."/>
            <person name="Amedeo P."/>
            <person name="Anderson M.J."/>
            <person name="Crabtree J."/>
            <person name="Silva J.C."/>
            <person name="Badger J.H."/>
            <person name="Albarraq A."/>
            <person name="Angiuoli S."/>
            <person name="Bussey H."/>
            <person name="Bowyer P."/>
            <person name="Cotty P.J."/>
            <person name="Dyer P.S."/>
            <person name="Egan A."/>
            <person name="Galens K."/>
            <person name="Fraser-Liggett C.M."/>
            <person name="Haas B.J."/>
            <person name="Inman J.M."/>
            <person name="Kent R."/>
            <person name="Lemieux S."/>
            <person name="Malavazi I."/>
            <person name="Orvis J."/>
            <person name="Roemer T."/>
            <person name="Ronning C.M."/>
            <person name="Sundaram J.P."/>
            <person name="Sutton G."/>
            <person name="Turner G."/>
            <person name="Venter J.C."/>
            <person name="White O.R."/>
            <person name="Whitty B.R."/>
            <person name="Youngman P."/>
            <person name="Wolfe K.H."/>
            <person name="Goldman G.H."/>
            <person name="Wortman J.R."/>
            <person name="Jiang B."/>
            <person name="Denning D.W."/>
            <person name="Nierman W.C."/>
        </authorList>
    </citation>
    <scope>NUCLEOTIDE SEQUENCE [LARGE SCALE GENOMIC DNA]</scope>
    <source>
        <strain>ATCC 1020 / DSM 3700 / CBS 544.65 / FGSC A1164 / JCM 1740 / NRRL 181 / WB 181</strain>
    </source>
</reference>
<keyword id="KW-0325">Glycoprotein</keyword>
<keyword id="KW-0378">Hydrolase</keyword>
<keyword id="KW-0479">Metal-binding</keyword>
<keyword id="KW-0645">Protease</keyword>
<keyword id="KW-1185">Reference proteome</keyword>
<keyword id="KW-0964">Secreted</keyword>
<keyword id="KW-0732">Signal</keyword>
<keyword id="KW-0862">Zinc</keyword>
<dbReference type="EC" id="3.4.17.-"/>
<dbReference type="EMBL" id="DS027698">
    <property type="protein sequence ID" value="EAW15900.1"/>
    <property type="molecule type" value="Genomic_DNA"/>
</dbReference>
<dbReference type="RefSeq" id="XP_001257797.1">
    <property type="nucleotide sequence ID" value="XM_001257796.1"/>
</dbReference>
<dbReference type="SMR" id="A1DM79"/>
<dbReference type="STRING" id="331117.A1DM79"/>
<dbReference type="EnsemblFungi" id="EAW15900">
    <property type="protein sequence ID" value="EAW15900"/>
    <property type="gene ID" value="NFIA_052450"/>
</dbReference>
<dbReference type="GeneID" id="4584312"/>
<dbReference type="KEGG" id="nfi:NFIA_052450"/>
<dbReference type="VEuPathDB" id="FungiDB:NFIA_052450"/>
<dbReference type="eggNOG" id="KOG2275">
    <property type="taxonomic scope" value="Eukaryota"/>
</dbReference>
<dbReference type="HOGENOM" id="CLU_021802_3_0_1"/>
<dbReference type="OMA" id="RLHKGVM"/>
<dbReference type="OrthoDB" id="3064516at2759"/>
<dbReference type="Proteomes" id="UP000006702">
    <property type="component" value="Unassembled WGS sequence"/>
</dbReference>
<dbReference type="GO" id="GO:0005576">
    <property type="term" value="C:extracellular region"/>
    <property type="evidence" value="ECO:0007669"/>
    <property type="project" value="UniProtKB-SubCell"/>
</dbReference>
<dbReference type="GO" id="GO:0046872">
    <property type="term" value="F:metal ion binding"/>
    <property type="evidence" value="ECO:0007669"/>
    <property type="project" value="UniProtKB-KW"/>
</dbReference>
<dbReference type="GO" id="GO:0008233">
    <property type="term" value="F:peptidase activity"/>
    <property type="evidence" value="ECO:0007669"/>
    <property type="project" value="UniProtKB-KW"/>
</dbReference>
<dbReference type="GO" id="GO:0006508">
    <property type="term" value="P:proteolysis"/>
    <property type="evidence" value="ECO:0007669"/>
    <property type="project" value="UniProtKB-KW"/>
</dbReference>
<dbReference type="CDD" id="cd05652">
    <property type="entry name" value="M20_ArgE_DapE-like_fungal"/>
    <property type="match status" value="1"/>
</dbReference>
<dbReference type="Gene3D" id="3.30.70.360">
    <property type="match status" value="1"/>
</dbReference>
<dbReference type="Gene3D" id="3.40.630.10">
    <property type="entry name" value="Zn peptidases"/>
    <property type="match status" value="1"/>
</dbReference>
<dbReference type="InterPro" id="IPR001261">
    <property type="entry name" value="ArgE/DapE_CS"/>
</dbReference>
<dbReference type="InterPro" id="IPR036264">
    <property type="entry name" value="Bact_exopeptidase_dim_dom"/>
</dbReference>
<dbReference type="InterPro" id="IPR002933">
    <property type="entry name" value="Peptidase_M20"/>
</dbReference>
<dbReference type="InterPro" id="IPR011650">
    <property type="entry name" value="Peptidase_M20_dimer"/>
</dbReference>
<dbReference type="InterPro" id="IPR050072">
    <property type="entry name" value="Peptidase_M20A"/>
</dbReference>
<dbReference type="InterPro" id="IPR001160">
    <property type="entry name" value="Peptidase_M20C"/>
</dbReference>
<dbReference type="PANTHER" id="PTHR43808">
    <property type="entry name" value="ACETYLORNITHINE DEACETYLASE"/>
    <property type="match status" value="1"/>
</dbReference>
<dbReference type="PANTHER" id="PTHR43808:SF8">
    <property type="entry name" value="PEPTIDASE M20 DIMERISATION DOMAIN-CONTAINING PROTEIN"/>
    <property type="match status" value="1"/>
</dbReference>
<dbReference type="Pfam" id="PF07687">
    <property type="entry name" value="M20_dimer"/>
    <property type="match status" value="1"/>
</dbReference>
<dbReference type="Pfam" id="PF01546">
    <property type="entry name" value="Peptidase_M20"/>
    <property type="match status" value="1"/>
</dbReference>
<dbReference type="PRINTS" id="PR00934">
    <property type="entry name" value="XHISDIPTASE"/>
</dbReference>
<dbReference type="SUPFAM" id="SSF55031">
    <property type="entry name" value="Bacterial exopeptidase dimerisation domain"/>
    <property type="match status" value="1"/>
</dbReference>
<dbReference type="SUPFAM" id="SSF53187">
    <property type="entry name" value="Zn-dependent exopeptidases"/>
    <property type="match status" value="1"/>
</dbReference>
<dbReference type="PROSITE" id="PS00758">
    <property type="entry name" value="ARGE_DAPE_CPG2_1"/>
    <property type="match status" value="1"/>
</dbReference>
<dbReference type="PROSITE" id="PS00759">
    <property type="entry name" value="ARGE_DAPE_CPG2_2"/>
    <property type="match status" value="1"/>
</dbReference>
<evidence type="ECO:0000250" key="1"/>
<evidence type="ECO:0000255" key="2"/>
<evidence type="ECO:0000305" key="3"/>
<proteinExistence type="inferred from homology"/>
<organism>
    <name type="scientific">Neosartorya fischeri (strain ATCC 1020 / DSM 3700 / CBS 544.65 / FGSC A1164 / JCM 1740 / NRRL 181 / WB 181)</name>
    <name type="common">Aspergillus fischerianus</name>
    <dbReference type="NCBI Taxonomy" id="331117"/>
    <lineage>
        <taxon>Eukaryota</taxon>
        <taxon>Fungi</taxon>
        <taxon>Dikarya</taxon>
        <taxon>Ascomycota</taxon>
        <taxon>Pezizomycotina</taxon>
        <taxon>Eurotiomycetes</taxon>
        <taxon>Eurotiomycetidae</taxon>
        <taxon>Eurotiales</taxon>
        <taxon>Aspergillaceae</taxon>
        <taxon>Aspergillus</taxon>
        <taxon>Aspergillus subgen. Fumigati</taxon>
    </lineage>
</organism>
<sequence length="441" mass="46450">MKPLSSLLLSAALSAAAPPHPASPQAPLADIPRIGVETRTEFSQNSLDDVVNASPLLSFHRDLVSIESISGNEGAAGAFVADFLESHNFTVIKQPVTTESDARFNIFAFPKSQSHSLDESHPSHGPQILLTSHIDTVPPFIPYSLHRDANDTDDRNILIAGRGTVDAKGSVAAQIFAALDTLAVQPPAPLGLLFVVGEETGGDGMKAFSQSTHLNPSPSRFHTVIFGEPTELALVAGHKGMLGFEVAAHGHAAHSGYPWLGESAISAILPALARVDHLGNIPVEEGGLPASDKYGRTTVNIGQMEGGVAANVVPSEARAGVAVRLAAGTHDEAREIVLKAVRDATGGDDRVVVNFSLEGYGPQDLDTDVAGFNVTTVNYGTDVPNLQLHPRPDGKVKRYLYGPGTIHVAHGDNEALTVAQLEEAVRGYKKLIQAALDRSTS</sequence>